<feature type="chain" id="PRO_0000237496" description="DNA-directed RNA polymerase subunit omega">
    <location>
        <begin position="1"/>
        <end position="134"/>
    </location>
</feature>
<feature type="region of interest" description="Disordered" evidence="2">
    <location>
        <begin position="76"/>
        <end position="102"/>
    </location>
</feature>
<organism>
    <name type="scientific">Rhizobium etli (strain ATCC 51251 / DSM 11541 / JCM 21823 / NBRC 15573 / CFN 42)</name>
    <dbReference type="NCBI Taxonomy" id="347834"/>
    <lineage>
        <taxon>Bacteria</taxon>
        <taxon>Pseudomonadati</taxon>
        <taxon>Pseudomonadota</taxon>
        <taxon>Alphaproteobacteria</taxon>
        <taxon>Hyphomicrobiales</taxon>
        <taxon>Rhizobiaceae</taxon>
        <taxon>Rhizobium/Agrobacterium group</taxon>
        <taxon>Rhizobium</taxon>
    </lineage>
</organism>
<proteinExistence type="inferred from homology"/>
<reference key="1">
    <citation type="journal article" date="2006" name="Proc. Natl. Acad. Sci. U.S.A.">
        <title>The partitioned Rhizobium etli genome: genetic and metabolic redundancy in seven interacting replicons.</title>
        <authorList>
            <person name="Gonzalez V."/>
            <person name="Santamaria R.I."/>
            <person name="Bustos P."/>
            <person name="Hernandez-Gonzalez I."/>
            <person name="Medrano-Soto A."/>
            <person name="Moreno-Hagelsieb G."/>
            <person name="Janga S.C."/>
            <person name="Ramirez M.A."/>
            <person name="Jimenez-Jacinto V."/>
            <person name="Collado-Vides J."/>
            <person name="Davila G."/>
        </authorList>
    </citation>
    <scope>NUCLEOTIDE SEQUENCE [LARGE SCALE GENOMIC DNA]</scope>
    <source>
        <strain>ATCC 51251 / DSM 11541 / JCM 21823 / NBRC 15573 / CFN 42</strain>
    </source>
</reference>
<sequence length="134" mass="14696">MARVTVEDCIDKVENRFELVLLASHRARLISQGASITIDRDNDKNPVVALREIADETLSPDDLKEDLIHSLQKHVEVDEPEPDPASMIAAGGAAAADSEEQDDLPETITFDQMSEEELLAGIEGLVPPEKSDDY</sequence>
<keyword id="KW-0240">DNA-directed RNA polymerase</keyword>
<keyword id="KW-0548">Nucleotidyltransferase</keyword>
<keyword id="KW-1185">Reference proteome</keyword>
<keyword id="KW-0804">Transcription</keyword>
<keyword id="KW-0808">Transferase</keyword>
<comment type="function">
    <text evidence="1">Promotes RNA polymerase assembly. Latches the N- and C-terminal regions of the beta' subunit thereby facilitating its interaction with the beta and alpha subunits.</text>
</comment>
<comment type="catalytic activity">
    <reaction evidence="1">
        <text>RNA(n) + a ribonucleoside 5'-triphosphate = RNA(n+1) + diphosphate</text>
        <dbReference type="Rhea" id="RHEA:21248"/>
        <dbReference type="Rhea" id="RHEA-COMP:14527"/>
        <dbReference type="Rhea" id="RHEA-COMP:17342"/>
        <dbReference type="ChEBI" id="CHEBI:33019"/>
        <dbReference type="ChEBI" id="CHEBI:61557"/>
        <dbReference type="ChEBI" id="CHEBI:140395"/>
        <dbReference type="EC" id="2.7.7.6"/>
    </reaction>
</comment>
<comment type="subunit">
    <text evidence="1">The RNAP catalytic core consists of 2 alpha, 1 beta, 1 beta' and 1 omega subunit. When a sigma factor is associated with the core the holoenzyme is formed, which can initiate transcription.</text>
</comment>
<comment type="similarity">
    <text evidence="1">Belongs to the RNA polymerase subunit omega family.</text>
</comment>
<protein>
    <recommendedName>
        <fullName evidence="1">DNA-directed RNA polymerase subunit omega</fullName>
        <shortName evidence="1">RNAP omega subunit</shortName>
        <ecNumber evidence="1">2.7.7.6</ecNumber>
    </recommendedName>
    <alternativeName>
        <fullName evidence="1">RNA polymerase omega subunit</fullName>
    </alternativeName>
    <alternativeName>
        <fullName evidence="1">Transcriptase subunit omega</fullName>
    </alternativeName>
</protein>
<evidence type="ECO:0000255" key="1">
    <source>
        <dbReference type="HAMAP-Rule" id="MF_00366"/>
    </source>
</evidence>
<evidence type="ECO:0000256" key="2">
    <source>
        <dbReference type="SAM" id="MobiDB-lite"/>
    </source>
</evidence>
<dbReference type="EC" id="2.7.7.6" evidence="1"/>
<dbReference type="EMBL" id="CP000133">
    <property type="protein sequence ID" value="ABC90187.1"/>
    <property type="molecule type" value="Genomic_DNA"/>
</dbReference>
<dbReference type="RefSeq" id="WP_011424719.1">
    <property type="nucleotide sequence ID" value="NC_007761.1"/>
</dbReference>
<dbReference type="SMR" id="Q2KAE9"/>
<dbReference type="GeneID" id="91147846"/>
<dbReference type="KEGG" id="ret:RHE_CH01384"/>
<dbReference type="eggNOG" id="COG1758">
    <property type="taxonomic scope" value="Bacteria"/>
</dbReference>
<dbReference type="HOGENOM" id="CLU_125406_2_0_5"/>
<dbReference type="OrthoDB" id="9796300at2"/>
<dbReference type="Proteomes" id="UP000001936">
    <property type="component" value="Chromosome"/>
</dbReference>
<dbReference type="GO" id="GO:0000428">
    <property type="term" value="C:DNA-directed RNA polymerase complex"/>
    <property type="evidence" value="ECO:0007669"/>
    <property type="project" value="UniProtKB-KW"/>
</dbReference>
<dbReference type="GO" id="GO:0003677">
    <property type="term" value="F:DNA binding"/>
    <property type="evidence" value="ECO:0007669"/>
    <property type="project" value="UniProtKB-UniRule"/>
</dbReference>
<dbReference type="GO" id="GO:0003899">
    <property type="term" value="F:DNA-directed RNA polymerase activity"/>
    <property type="evidence" value="ECO:0007669"/>
    <property type="project" value="UniProtKB-UniRule"/>
</dbReference>
<dbReference type="GO" id="GO:0006351">
    <property type="term" value="P:DNA-templated transcription"/>
    <property type="evidence" value="ECO:0007669"/>
    <property type="project" value="UniProtKB-UniRule"/>
</dbReference>
<dbReference type="Gene3D" id="3.90.940.10">
    <property type="match status" value="1"/>
</dbReference>
<dbReference type="HAMAP" id="MF_00366">
    <property type="entry name" value="RNApol_bact_RpoZ"/>
    <property type="match status" value="1"/>
</dbReference>
<dbReference type="InterPro" id="IPR003716">
    <property type="entry name" value="DNA-dir_RNA_pol_omega"/>
</dbReference>
<dbReference type="InterPro" id="IPR006110">
    <property type="entry name" value="Pol_omega/Rpo6/RPB6"/>
</dbReference>
<dbReference type="InterPro" id="IPR036161">
    <property type="entry name" value="RPB6/omega-like_sf"/>
</dbReference>
<dbReference type="NCBIfam" id="TIGR00690">
    <property type="entry name" value="rpoZ"/>
    <property type="match status" value="1"/>
</dbReference>
<dbReference type="PANTHER" id="PTHR34476">
    <property type="entry name" value="DNA-DIRECTED RNA POLYMERASE SUBUNIT OMEGA"/>
    <property type="match status" value="1"/>
</dbReference>
<dbReference type="PANTHER" id="PTHR34476:SF1">
    <property type="entry name" value="DNA-DIRECTED RNA POLYMERASE SUBUNIT OMEGA"/>
    <property type="match status" value="1"/>
</dbReference>
<dbReference type="Pfam" id="PF01192">
    <property type="entry name" value="RNA_pol_Rpb6"/>
    <property type="match status" value="1"/>
</dbReference>
<dbReference type="SMART" id="SM01409">
    <property type="entry name" value="RNA_pol_Rpb6"/>
    <property type="match status" value="1"/>
</dbReference>
<dbReference type="SUPFAM" id="SSF63562">
    <property type="entry name" value="RPB6/omega subunit-like"/>
    <property type="match status" value="1"/>
</dbReference>
<gene>
    <name evidence="1" type="primary">rpoZ</name>
    <name type="ordered locus">RHE_CH01384</name>
</gene>
<name>RPOZ_RHIEC</name>
<accession>Q2KAE9</accession>